<evidence type="ECO:0000255" key="1">
    <source>
        <dbReference type="HAMAP-Rule" id="MF_01217"/>
    </source>
</evidence>
<evidence type="ECO:0000255" key="2">
    <source>
        <dbReference type="PROSITE-ProRule" id="PRU00258"/>
    </source>
</evidence>
<feature type="chain" id="PRO_1000066610" description="Acyl carrier protein">
    <location>
        <begin position="1"/>
        <end position="78"/>
    </location>
</feature>
<feature type="domain" description="Carrier" evidence="2">
    <location>
        <begin position="2"/>
        <end position="77"/>
    </location>
</feature>
<feature type="modified residue" description="O-(pantetheine 4'-phosphoryl)serine" evidence="2">
    <location>
        <position position="37"/>
    </location>
</feature>
<sequence length="78" mass="8524">MSDTADRVQKIVVEHLGVEADKVNQEASFIDDLGADSLDIVELVMAFEEEFGVEIPDDAAEKISTVGDATKYIEEHKG</sequence>
<protein>
    <recommendedName>
        <fullName evidence="1">Acyl carrier protein</fullName>
        <shortName evidence="1">ACP</shortName>
    </recommendedName>
</protein>
<dbReference type="EMBL" id="CP000157">
    <property type="protein sequence ID" value="ABC62889.1"/>
    <property type="molecule type" value="Genomic_DNA"/>
</dbReference>
<dbReference type="RefSeq" id="WP_011413765.1">
    <property type="nucleotide sequence ID" value="NC_007722.1"/>
</dbReference>
<dbReference type="SMR" id="Q2NBQ2"/>
<dbReference type="STRING" id="314225.ELI_03985"/>
<dbReference type="KEGG" id="eli:ELI_03985"/>
<dbReference type="eggNOG" id="COG0236">
    <property type="taxonomic scope" value="Bacteria"/>
</dbReference>
<dbReference type="HOGENOM" id="CLU_108696_5_1_5"/>
<dbReference type="OrthoDB" id="9804551at2"/>
<dbReference type="UniPathway" id="UPA00094"/>
<dbReference type="Proteomes" id="UP000008808">
    <property type="component" value="Chromosome"/>
</dbReference>
<dbReference type="GO" id="GO:0005829">
    <property type="term" value="C:cytosol"/>
    <property type="evidence" value="ECO:0007669"/>
    <property type="project" value="TreeGrafter"/>
</dbReference>
<dbReference type="GO" id="GO:0016020">
    <property type="term" value="C:membrane"/>
    <property type="evidence" value="ECO:0007669"/>
    <property type="project" value="GOC"/>
</dbReference>
<dbReference type="GO" id="GO:0000035">
    <property type="term" value="F:acyl binding"/>
    <property type="evidence" value="ECO:0007669"/>
    <property type="project" value="TreeGrafter"/>
</dbReference>
<dbReference type="GO" id="GO:0000036">
    <property type="term" value="F:acyl carrier activity"/>
    <property type="evidence" value="ECO:0007669"/>
    <property type="project" value="UniProtKB-UniRule"/>
</dbReference>
<dbReference type="GO" id="GO:0009245">
    <property type="term" value="P:lipid A biosynthetic process"/>
    <property type="evidence" value="ECO:0007669"/>
    <property type="project" value="TreeGrafter"/>
</dbReference>
<dbReference type="FunFam" id="1.10.1200.10:FF:000001">
    <property type="entry name" value="Acyl carrier protein"/>
    <property type="match status" value="1"/>
</dbReference>
<dbReference type="Gene3D" id="1.10.1200.10">
    <property type="entry name" value="ACP-like"/>
    <property type="match status" value="1"/>
</dbReference>
<dbReference type="HAMAP" id="MF_01217">
    <property type="entry name" value="Acyl_carrier"/>
    <property type="match status" value="1"/>
</dbReference>
<dbReference type="InterPro" id="IPR003231">
    <property type="entry name" value="ACP"/>
</dbReference>
<dbReference type="InterPro" id="IPR036736">
    <property type="entry name" value="ACP-like_sf"/>
</dbReference>
<dbReference type="InterPro" id="IPR009081">
    <property type="entry name" value="PP-bd_ACP"/>
</dbReference>
<dbReference type="InterPro" id="IPR006162">
    <property type="entry name" value="Ppantetheine_attach_site"/>
</dbReference>
<dbReference type="NCBIfam" id="TIGR00517">
    <property type="entry name" value="acyl_carrier"/>
    <property type="match status" value="1"/>
</dbReference>
<dbReference type="NCBIfam" id="NF002148">
    <property type="entry name" value="PRK00982.1-2"/>
    <property type="match status" value="1"/>
</dbReference>
<dbReference type="NCBIfam" id="NF002149">
    <property type="entry name" value="PRK00982.1-3"/>
    <property type="match status" value="1"/>
</dbReference>
<dbReference type="NCBIfam" id="NF002150">
    <property type="entry name" value="PRK00982.1-4"/>
    <property type="match status" value="1"/>
</dbReference>
<dbReference type="NCBIfam" id="NF002151">
    <property type="entry name" value="PRK00982.1-5"/>
    <property type="match status" value="1"/>
</dbReference>
<dbReference type="PANTHER" id="PTHR20863">
    <property type="entry name" value="ACYL CARRIER PROTEIN"/>
    <property type="match status" value="1"/>
</dbReference>
<dbReference type="PANTHER" id="PTHR20863:SF76">
    <property type="entry name" value="CARRIER DOMAIN-CONTAINING PROTEIN"/>
    <property type="match status" value="1"/>
</dbReference>
<dbReference type="Pfam" id="PF00550">
    <property type="entry name" value="PP-binding"/>
    <property type="match status" value="1"/>
</dbReference>
<dbReference type="SUPFAM" id="SSF47336">
    <property type="entry name" value="ACP-like"/>
    <property type="match status" value="1"/>
</dbReference>
<dbReference type="PROSITE" id="PS50075">
    <property type="entry name" value="CARRIER"/>
    <property type="match status" value="1"/>
</dbReference>
<dbReference type="PROSITE" id="PS00012">
    <property type="entry name" value="PHOSPHOPANTETHEINE"/>
    <property type="match status" value="1"/>
</dbReference>
<proteinExistence type="inferred from homology"/>
<gene>
    <name evidence="1" type="primary">acpP</name>
    <name type="ordered locus">ELI_03985</name>
</gene>
<organism>
    <name type="scientific">Erythrobacter litoralis (strain HTCC2594)</name>
    <dbReference type="NCBI Taxonomy" id="314225"/>
    <lineage>
        <taxon>Bacteria</taxon>
        <taxon>Pseudomonadati</taxon>
        <taxon>Pseudomonadota</taxon>
        <taxon>Alphaproteobacteria</taxon>
        <taxon>Sphingomonadales</taxon>
        <taxon>Erythrobacteraceae</taxon>
        <taxon>Erythrobacter/Porphyrobacter group</taxon>
        <taxon>Erythrobacter</taxon>
    </lineage>
</organism>
<name>ACP_ERYLH</name>
<comment type="function">
    <text evidence="1">Carrier of the growing fatty acid chain in fatty acid biosynthesis.</text>
</comment>
<comment type="pathway">
    <text evidence="1">Lipid metabolism; fatty acid biosynthesis.</text>
</comment>
<comment type="subcellular location">
    <subcellularLocation>
        <location evidence="1">Cytoplasm</location>
    </subcellularLocation>
</comment>
<comment type="PTM">
    <text evidence="1">4'-phosphopantetheine is transferred from CoA to a specific serine of apo-ACP by AcpS. This modification is essential for activity because fatty acids are bound in thioester linkage to the sulfhydryl of the prosthetic group.</text>
</comment>
<comment type="similarity">
    <text evidence="1">Belongs to the acyl carrier protein (ACP) family.</text>
</comment>
<accession>Q2NBQ2</accession>
<reference key="1">
    <citation type="journal article" date="2009" name="J. Bacteriol.">
        <title>Complete genome sequence of Erythrobacter litoralis HTCC2594.</title>
        <authorList>
            <person name="Oh H.M."/>
            <person name="Giovannoni S.J."/>
            <person name="Ferriera S."/>
            <person name="Johnson J."/>
            <person name="Cho J.C."/>
        </authorList>
    </citation>
    <scope>NUCLEOTIDE SEQUENCE [LARGE SCALE GENOMIC DNA]</scope>
    <source>
        <strain>HTCC2594</strain>
    </source>
</reference>
<keyword id="KW-0963">Cytoplasm</keyword>
<keyword id="KW-0275">Fatty acid biosynthesis</keyword>
<keyword id="KW-0276">Fatty acid metabolism</keyword>
<keyword id="KW-0444">Lipid biosynthesis</keyword>
<keyword id="KW-0443">Lipid metabolism</keyword>
<keyword id="KW-0596">Phosphopantetheine</keyword>
<keyword id="KW-0597">Phosphoprotein</keyword>
<keyword id="KW-1185">Reference proteome</keyword>